<comment type="subunit">
    <text evidence="1">Part of the 50S ribosomal subunit.</text>
</comment>
<comment type="similarity">
    <text evidence="1">Belongs to the universal ribosomal protein uL30 family.</text>
</comment>
<proteinExistence type="inferred from homology"/>
<organism>
    <name type="scientific">Trichlorobacter lovleyi (strain ATCC BAA-1151 / DSM 17278 / SZ)</name>
    <name type="common">Geobacter lovleyi</name>
    <dbReference type="NCBI Taxonomy" id="398767"/>
    <lineage>
        <taxon>Bacteria</taxon>
        <taxon>Pseudomonadati</taxon>
        <taxon>Thermodesulfobacteriota</taxon>
        <taxon>Desulfuromonadia</taxon>
        <taxon>Geobacterales</taxon>
        <taxon>Geobacteraceae</taxon>
        <taxon>Trichlorobacter</taxon>
    </lineage>
</organism>
<protein>
    <recommendedName>
        <fullName evidence="1">Large ribosomal subunit protein uL30</fullName>
    </recommendedName>
    <alternativeName>
        <fullName evidence="2">50S ribosomal protein L30</fullName>
    </alternativeName>
</protein>
<evidence type="ECO:0000255" key="1">
    <source>
        <dbReference type="HAMAP-Rule" id="MF_01371"/>
    </source>
</evidence>
<evidence type="ECO:0000305" key="2"/>
<gene>
    <name evidence="1" type="primary">rpmD</name>
    <name type="ordered locus">Glov_1364</name>
</gene>
<accession>B3E848</accession>
<reference key="1">
    <citation type="submission" date="2008-05" db="EMBL/GenBank/DDBJ databases">
        <title>Complete sequence of chromosome of Geobacter lovleyi SZ.</title>
        <authorList>
            <consortium name="US DOE Joint Genome Institute"/>
            <person name="Lucas S."/>
            <person name="Copeland A."/>
            <person name="Lapidus A."/>
            <person name="Glavina del Rio T."/>
            <person name="Dalin E."/>
            <person name="Tice H."/>
            <person name="Bruce D."/>
            <person name="Goodwin L."/>
            <person name="Pitluck S."/>
            <person name="Chertkov O."/>
            <person name="Meincke L."/>
            <person name="Brettin T."/>
            <person name="Detter J.C."/>
            <person name="Han C."/>
            <person name="Tapia R."/>
            <person name="Kuske C.R."/>
            <person name="Schmutz J."/>
            <person name="Larimer F."/>
            <person name="Land M."/>
            <person name="Hauser L."/>
            <person name="Kyrpides N."/>
            <person name="Mikhailova N."/>
            <person name="Sung Y."/>
            <person name="Fletcher K.E."/>
            <person name="Ritalahti K.M."/>
            <person name="Loeffler F.E."/>
            <person name="Richardson P."/>
        </authorList>
    </citation>
    <scope>NUCLEOTIDE SEQUENCE [LARGE SCALE GENOMIC DNA]</scope>
    <source>
        <strain>ATCC BAA-1151 / DSM 17278 / SZ</strain>
    </source>
</reference>
<name>RL30_TRIL1</name>
<feature type="chain" id="PRO_1000144689" description="Large ribosomal subunit protein uL30">
    <location>
        <begin position="1"/>
        <end position="58"/>
    </location>
</feature>
<dbReference type="EMBL" id="CP001089">
    <property type="protein sequence ID" value="ACD95085.1"/>
    <property type="molecule type" value="Genomic_DNA"/>
</dbReference>
<dbReference type="RefSeq" id="WP_012469430.1">
    <property type="nucleotide sequence ID" value="NC_010814.1"/>
</dbReference>
<dbReference type="SMR" id="B3E848"/>
<dbReference type="STRING" id="398767.Glov_1364"/>
<dbReference type="KEGG" id="glo:Glov_1364"/>
<dbReference type="eggNOG" id="COG1841">
    <property type="taxonomic scope" value="Bacteria"/>
</dbReference>
<dbReference type="HOGENOM" id="CLU_131047_2_1_7"/>
<dbReference type="OrthoDB" id="9812790at2"/>
<dbReference type="Proteomes" id="UP000002420">
    <property type="component" value="Chromosome"/>
</dbReference>
<dbReference type="GO" id="GO:0022625">
    <property type="term" value="C:cytosolic large ribosomal subunit"/>
    <property type="evidence" value="ECO:0007669"/>
    <property type="project" value="TreeGrafter"/>
</dbReference>
<dbReference type="GO" id="GO:0003735">
    <property type="term" value="F:structural constituent of ribosome"/>
    <property type="evidence" value="ECO:0007669"/>
    <property type="project" value="InterPro"/>
</dbReference>
<dbReference type="GO" id="GO:0006412">
    <property type="term" value="P:translation"/>
    <property type="evidence" value="ECO:0007669"/>
    <property type="project" value="InterPro"/>
</dbReference>
<dbReference type="CDD" id="cd01658">
    <property type="entry name" value="Ribosomal_L30"/>
    <property type="match status" value="1"/>
</dbReference>
<dbReference type="Gene3D" id="3.30.1390.20">
    <property type="entry name" value="Ribosomal protein L30, ferredoxin-like fold domain"/>
    <property type="match status" value="1"/>
</dbReference>
<dbReference type="HAMAP" id="MF_01371_B">
    <property type="entry name" value="Ribosomal_uL30_B"/>
    <property type="match status" value="1"/>
</dbReference>
<dbReference type="InterPro" id="IPR036919">
    <property type="entry name" value="Ribo_uL30_ferredoxin-like_sf"/>
</dbReference>
<dbReference type="InterPro" id="IPR005996">
    <property type="entry name" value="Ribosomal_uL30_bac-type"/>
</dbReference>
<dbReference type="InterPro" id="IPR016082">
    <property type="entry name" value="Ribosomal_uL30_ferredoxin-like"/>
</dbReference>
<dbReference type="NCBIfam" id="TIGR01308">
    <property type="entry name" value="rpmD_bact"/>
    <property type="match status" value="1"/>
</dbReference>
<dbReference type="PANTHER" id="PTHR15892:SF2">
    <property type="entry name" value="LARGE RIBOSOMAL SUBUNIT PROTEIN UL30M"/>
    <property type="match status" value="1"/>
</dbReference>
<dbReference type="PANTHER" id="PTHR15892">
    <property type="entry name" value="MITOCHONDRIAL RIBOSOMAL PROTEIN L30"/>
    <property type="match status" value="1"/>
</dbReference>
<dbReference type="Pfam" id="PF00327">
    <property type="entry name" value="Ribosomal_L30"/>
    <property type="match status" value="1"/>
</dbReference>
<dbReference type="PIRSF" id="PIRSF002211">
    <property type="entry name" value="Ribosomal_L30_bac-type"/>
    <property type="match status" value="1"/>
</dbReference>
<dbReference type="SUPFAM" id="SSF55129">
    <property type="entry name" value="Ribosomal protein L30p/L7e"/>
    <property type="match status" value="1"/>
</dbReference>
<sequence length="58" mass="6478">MSNMLEITLIKSTIGATEKQCAVVRGLGLRRLHQTVTLQDSPETRGMISKINHMLKVK</sequence>
<keyword id="KW-1185">Reference proteome</keyword>
<keyword id="KW-0687">Ribonucleoprotein</keyword>
<keyword id="KW-0689">Ribosomal protein</keyword>